<sequence>MLMPRQNCEVFRQLFVNDTPLMDMRAPIEFAQGAFPTSINHPLMEDEERKAVGTCYKAHGQDAAIALGHQLVNGDIKAARLAQWKAFAEENPNGYLYCFRGGLRSRITQQWLKEAGIDYPMVVGGYKALRRFLIETIDTVAQQPMTIVGGNTGSGKTIMVNELANGIDLEGAANHRGSSFGRYVTAQRTQIDFENVLAVEMLKKQAQGCTHFVFEDEGRAIGSASVPLSINAAMGNADVAIVDDPLDVRIDRLIDDYVVRMQRDYIAQNGEQQGWELFTEYLERGMFGIRKRLGMKRYEELLAAQKQAIATQKSNGTLAEHDNWLRPLLIEYYDPMYTYQLSKKADRIVFRGNYQEVKSWLADK</sequence>
<reference key="1">
    <citation type="journal article" date="2005" name="Science">
        <title>Life at depth: Photobacterium profundum genome sequence and expression analysis.</title>
        <authorList>
            <person name="Vezzi A."/>
            <person name="Campanaro S."/>
            <person name="D'Angelo M."/>
            <person name="Simonato F."/>
            <person name="Vitulo N."/>
            <person name="Lauro F.M."/>
            <person name="Cestaro A."/>
            <person name="Malacrida G."/>
            <person name="Simionati B."/>
            <person name="Cannata N."/>
            <person name="Romualdi C."/>
            <person name="Bartlett D.H."/>
            <person name="Valle G."/>
        </authorList>
    </citation>
    <scope>NUCLEOTIDE SEQUENCE [LARGE SCALE GENOMIC DNA]</scope>
    <source>
        <strain>ATCC BAA-1253 / SS9</strain>
    </source>
</reference>
<organism>
    <name type="scientific">Photobacterium profundum (strain SS9)</name>
    <dbReference type="NCBI Taxonomy" id="298386"/>
    <lineage>
        <taxon>Bacteria</taxon>
        <taxon>Pseudomonadati</taxon>
        <taxon>Pseudomonadota</taxon>
        <taxon>Gammaproteobacteria</taxon>
        <taxon>Vibrionales</taxon>
        <taxon>Vibrionaceae</taxon>
        <taxon>Photobacterium</taxon>
    </lineage>
</organism>
<feature type="chain" id="PRO_0000210863" description="tRNA 2-selenouridine synthase">
    <location>
        <begin position="1"/>
        <end position="364"/>
    </location>
</feature>
<feature type="domain" description="Rhodanese" evidence="1">
    <location>
        <begin position="15"/>
        <end position="138"/>
    </location>
</feature>
<feature type="active site" description="S-selanylcysteine intermediate" evidence="1">
    <location>
        <position position="98"/>
    </location>
</feature>
<dbReference type="EC" id="2.9.1.3" evidence="1"/>
<dbReference type="EMBL" id="CR378671">
    <property type="protein sequence ID" value="CAG20970.1"/>
    <property type="molecule type" value="Genomic_DNA"/>
</dbReference>
<dbReference type="SMR" id="Q6LP06"/>
<dbReference type="STRING" id="298386.PBPRA2591"/>
<dbReference type="KEGG" id="ppr:PBPRA2591"/>
<dbReference type="eggNOG" id="COG2603">
    <property type="taxonomic scope" value="Bacteria"/>
</dbReference>
<dbReference type="HOGENOM" id="CLU_043456_1_0_6"/>
<dbReference type="Proteomes" id="UP000000593">
    <property type="component" value="Chromosome 1"/>
</dbReference>
<dbReference type="GO" id="GO:0016765">
    <property type="term" value="F:transferase activity, transferring alkyl or aryl (other than methyl) groups"/>
    <property type="evidence" value="ECO:0007669"/>
    <property type="project" value="UniProtKB-UniRule"/>
</dbReference>
<dbReference type="GO" id="GO:0043828">
    <property type="term" value="F:tRNA 2-selenouridine synthase activity"/>
    <property type="evidence" value="ECO:0007669"/>
    <property type="project" value="UniProtKB-EC"/>
</dbReference>
<dbReference type="GO" id="GO:0002098">
    <property type="term" value="P:tRNA wobble uridine modification"/>
    <property type="evidence" value="ECO:0007669"/>
    <property type="project" value="UniProtKB-UniRule"/>
</dbReference>
<dbReference type="CDD" id="cd01520">
    <property type="entry name" value="RHOD_YbbB"/>
    <property type="match status" value="1"/>
</dbReference>
<dbReference type="Gene3D" id="3.40.250.10">
    <property type="entry name" value="Rhodanese-like domain"/>
    <property type="match status" value="1"/>
</dbReference>
<dbReference type="HAMAP" id="MF_01622">
    <property type="entry name" value="tRNA_sel_U_synth"/>
    <property type="match status" value="1"/>
</dbReference>
<dbReference type="InterPro" id="IPR001763">
    <property type="entry name" value="Rhodanese-like_dom"/>
</dbReference>
<dbReference type="InterPro" id="IPR036873">
    <property type="entry name" value="Rhodanese-like_dom_sf"/>
</dbReference>
<dbReference type="InterPro" id="IPR017582">
    <property type="entry name" value="SelU"/>
</dbReference>
<dbReference type="NCBIfam" id="NF008751">
    <property type="entry name" value="PRK11784.1-3"/>
    <property type="match status" value="1"/>
</dbReference>
<dbReference type="NCBIfam" id="TIGR03167">
    <property type="entry name" value="tRNA_sel_U_synt"/>
    <property type="match status" value="1"/>
</dbReference>
<dbReference type="PANTHER" id="PTHR30401">
    <property type="entry name" value="TRNA 2-SELENOURIDINE SYNTHASE"/>
    <property type="match status" value="1"/>
</dbReference>
<dbReference type="PANTHER" id="PTHR30401:SF0">
    <property type="entry name" value="TRNA 2-SELENOURIDINE SYNTHASE"/>
    <property type="match status" value="1"/>
</dbReference>
<dbReference type="SMART" id="SM00450">
    <property type="entry name" value="RHOD"/>
    <property type="match status" value="1"/>
</dbReference>
<dbReference type="SUPFAM" id="SSF52821">
    <property type="entry name" value="Rhodanese/Cell cycle control phosphatase"/>
    <property type="match status" value="1"/>
</dbReference>
<dbReference type="PROSITE" id="PS50206">
    <property type="entry name" value="RHODANESE_3"/>
    <property type="match status" value="1"/>
</dbReference>
<evidence type="ECO:0000255" key="1">
    <source>
        <dbReference type="HAMAP-Rule" id="MF_01622"/>
    </source>
</evidence>
<proteinExistence type="inferred from homology"/>
<comment type="function">
    <text evidence="1">Involved in the post-transcriptional modification of the uridine at the wobble position (U34) of tRNA(Lys), tRNA(Glu) and tRNA(Gln). Catalyzes the conversion of 2-thiouridine (S2U-RNA) to 2-selenouridine (Se2U-RNA). Acts in a two-step process involving geranylation of 2-thiouridine (S2U) to S-geranyl-2-thiouridine (geS2U) and subsequent selenation of the latter derivative to 2-selenouridine (Se2U) in the tRNA chain.</text>
</comment>
<comment type="catalytic activity">
    <reaction evidence="1">
        <text>5-methylaminomethyl-2-thiouridine(34) in tRNA + selenophosphate + (2E)-geranyl diphosphate + H2O + H(+) = 5-methylaminomethyl-2-selenouridine(34) in tRNA + (2E)-thiogeraniol + phosphate + diphosphate</text>
        <dbReference type="Rhea" id="RHEA:42716"/>
        <dbReference type="Rhea" id="RHEA-COMP:10195"/>
        <dbReference type="Rhea" id="RHEA-COMP:10196"/>
        <dbReference type="ChEBI" id="CHEBI:15377"/>
        <dbReference type="ChEBI" id="CHEBI:15378"/>
        <dbReference type="ChEBI" id="CHEBI:16144"/>
        <dbReference type="ChEBI" id="CHEBI:33019"/>
        <dbReference type="ChEBI" id="CHEBI:43474"/>
        <dbReference type="ChEBI" id="CHEBI:58057"/>
        <dbReference type="ChEBI" id="CHEBI:74455"/>
        <dbReference type="ChEBI" id="CHEBI:82743"/>
        <dbReference type="ChEBI" id="CHEBI:143703"/>
        <dbReference type="EC" id="2.9.1.3"/>
    </reaction>
    <physiologicalReaction direction="left-to-right" evidence="1">
        <dbReference type="Rhea" id="RHEA:42717"/>
    </physiologicalReaction>
</comment>
<comment type="catalytic activity">
    <reaction evidence="1">
        <text>5-methylaminomethyl-2-thiouridine(34) in tRNA + (2E)-geranyl diphosphate = 5-methylaminomethyl-S-(2E)-geranyl-thiouridine(34) in tRNA + diphosphate</text>
        <dbReference type="Rhea" id="RHEA:14085"/>
        <dbReference type="Rhea" id="RHEA-COMP:10195"/>
        <dbReference type="Rhea" id="RHEA-COMP:14654"/>
        <dbReference type="ChEBI" id="CHEBI:33019"/>
        <dbReference type="ChEBI" id="CHEBI:58057"/>
        <dbReference type="ChEBI" id="CHEBI:74455"/>
        <dbReference type="ChEBI" id="CHEBI:140632"/>
    </reaction>
    <physiologicalReaction direction="left-to-right" evidence="1">
        <dbReference type="Rhea" id="RHEA:14086"/>
    </physiologicalReaction>
</comment>
<comment type="catalytic activity">
    <reaction evidence="1">
        <text>5-methylaminomethyl-S-(2E)-geranyl-thiouridine(34) in tRNA + selenophosphate + H(+) = 5-methylaminomethyl-2-(Se-phospho)selenouridine(34) in tRNA + (2E)-thiogeraniol</text>
        <dbReference type="Rhea" id="RHEA:60172"/>
        <dbReference type="Rhea" id="RHEA-COMP:14654"/>
        <dbReference type="Rhea" id="RHEA-COMP:15523"/>
        <dbReference type="ChEBI" id="CHEBI:15378"/>
        <dbReference type="ChEBI" id="CHEBI:16144"/>
        <dbReference type="ChEBI" id="CHEBI:140632"/>
        <dbReference type="ChEBI" id="CHEBI:143702"/>
        <dbReference type="ChEBI" id="CHEBI:143703"/>
    </reaction>
    <physiologicalReaction direction="left-to-right" evidence="1">
        <dbReference type="Rhea" id="RHEA:60173"/>
    </physiologicalReaction>
</comment>
<comment type="catalytic activity">
    <reaction evidence="1">
        <text>5-methylaminomethyl-2-(Se-phospho)selenouridine(34) in tRNA + H2O = 5-methylaminomethyl-2-selenouridine(34) in tRNA + phosphate</text>
        <dbReference type="Rhea" id="RHEA:60176"/>
        <dbReference type="Rhea" id="RHEA-COMP:10196"/>
        <dbReference type="Rhea" id="RHEA-COMP:15523"/>
        <dbReference type="ChEBI" id="CHEBI:15377"/>
        <dbReference type="ChEBI" id="CHEBI:43474"/>
        <dbReference type="ChEBI" id="CHEBI:82743"/>
        <dbReference type="ChEBI" id="CHEBI:143702"/>
    </reaction>
    <physiologicalReaction direction="left-to-right" evidence="1">
        <dbReference type="Rhea" id="RHEA:60177"/>
    </physiologicalReaction>
</comment>
<comment type="subunit">
    <text evidence="1">Monomer.</text>
</comment>
<comment type="similarity">
    <text evidence="1">Belongs to the SelU family.</text>
</comment>
<protein>
    <recommendedName>
        <fullName evidence="1">tRNA 2-selenouridine synthase</fullName>
        <ecNumber evidence="1">2.9.1.3</ecNumber>
    </recommendedName>
</protein>
<accession>Q6LP06</accession>
<name>SELU_PHOPR</name>
<keyword id="KW-1185">Reference proteome</keyword>
<keyword id="KW-0711">Selenium</keyword>
<keyword id="KW-0808">Transferase</keyword>
<gene>
    <name evidence="1" type="primary">selU</name>
    <name type="ordered locus">PBPRA2591</name>
</gene>